<dbReference type="EMBL" id="AP008934">
    <property type="protein sequence ID" value="BAE18609.1"/>
    <property type="molecule type" value="Genomic_DNA"/>
</dbReference>
<dbReference type="RefSeq" id="WP_011303231.1">
    <property type="nucleotide sequence ID" value="NZ_MTGA01000034.1"/>
</dbReference>
<dbReference type="SMR" id="Q49X89"/>
<dbReference type="GeneID" id="3615091"/>
<dbReference type="KEGG" id="ssp:SSP1464"/>
<dbReference type="PATRIC" id="fig|342451.11.peg.1468"/>
<dbReference type="eggNOG" id="COG0323">
    <property type="taxonomic scope" value="Bacteria"/>
</dbReference>
<dbReference type="HOGENOM" id="CLU_004131_4_1_9"/>
<dbReference type="OrthoDB" id="9763467at2"/>
<dbReference type="Proteomes" id="UP000006371">
    <property type="component" value="Chromosome"/>
</dbReference>
<dbReference type="GO" id="GO:0032300">
    <property type="term" value="C:mismatch repair complex"/>
    <property type="evidence" value="ECO:0007669"/>
    <property type="project" value="InterPro"/>
</dbReference>
<dbReference type="GO" id="GO:0005524">
    <property type="term" value="F:ATP binding"/>
    <property type="evidence" value="ECO:0007669"/>
    <property type="project" value="InterPro"/>
</dbReference>
<dbReference type="GO" id="GO:0016887">
    <property type="term" value="F:ATP hydrolysis activity"/>
    <property type="evidence" value="ECO:0007669"/>
    <property type="project" value="InterPro"/>
</dbReference>
<dbReference type="GO" id="GO:0140664">
    <property type="term" value="F:ATP-dependent DNA damage sensor activity"/>
    <property type="evidence" value="ECO:0007669"/>
    <property type="project" value="InterPro"/>
</dbReference>
<dbReference type="GO" id="GO:0030983">
    <property type="term" value="F:mismatched DNA binding"/>
    <property type="evidence" value="ECO:0007669"/>
    <property type="project" value="InterPro"/>
</dbReference>
<dbReference type="GO" id="GO:0006298">
    <property type="term" value="P:mismatch repair"/>
    <property type="evidence" value="ECO:0007669"/>
    <property type="project" value="UniProtKB-UniRule"/>
</dbReference>
<dbReference type="CDD" id="cd16926">
    <property type="entry name" value="HATPase_MutL-MLH-PMS-like"/>
    <property type="match status" value="1"/>
</dbReference>
<dbReference type="CDD" id="cd00782">
    <property type="entry name" value="MutL_Trans"/>
    <property type="match status" value="1"/>
</dbReference>
<dbReference type="FunFam" id="3.30.1370.100:FF:000004">
    <property type="entry name" value="DNA mismatch repair endonuclease MutL"/>
    <property type="match status" value="1"/>
</dbReference>
<dbReference type="FunFam" id="3.30.230.10:FF:000036">
    <property type="entry name" value="DNA mismatch repair endonuclease MutL"/>
    <property type="match status" value="1"/>
</dbReference>
<dbReference type="FunFam" id="3.30.565.10:FF:000003">
    <property type="entry name" value="DNA mismatch repair endonuclease MutL"/>
    <property type="match status" value="1"/>
</dbReference>
<dbReference type="Gene3D" id="3.30.230.10">
    <property type="match status" value="1"/>
</dbReference>
<dbReference type="Gene3D" id="3.30.565.10">
    <property type="entry name" value="Histidine kinase-like ATPase, C-terminal domain"/>
    <property type="match status" value="1"/>
</dbReference>
<dbReference type="Gene3D" id="3.30.1540.20">
    <property type="entry name" value="MutL, C-terminal domain, dimerisation subdomain"/>
    <property type="match status" value="1"/>
</dbReference>
<dbReference type="Gene3D" id="3.30.1370.100">
    <property type="entry name" value="MutL, C-terminal domain, regulatory subdomain"/>
    <property type="match status" value="1"/>
</dbReference>
<dbReference type="HAMAP" id="MF_00149">
    <property type="entry name" value="DNA_mis_repair"/>
    <property type="match status" value="1"/>
</dbReference>
<dbReference type="InterPro" id="IPR014762">
    <property type="entry name" value="DNA_mismatch_repair_CS"/>
</dbReference>
<dbReference type="InterPro" id="IPR020667">
    <property type="entry name" value="DNA_mismatch_repair_MutL"/>
</dbReference>
<dbReference type="InterPro" id="IPR013507">
    <property type="entry name" value="DNA_mismatch_S5_2-like"/>
</dbReference>
<dbReference type="InterPro" id="IPR036890">
    <property type="entry name" value="HATPase_C_sf"/>
</dbReference>
<dbReference type="InterPro" id="IPR002099">
    <property type="entry name" value="MutL/Mlh/PMS"/>
</dbReference>
<dbReference type="InterPro" id="IPR038973">
    <property type="entry name" value="MutL/Mlh/Pms-like"/>
</dbReference>
<dbReference type="InterPro" id="IPR014790">
    <property type="entry name" value="MutL_C"/>
</dbReference>
<dbReference type="InterPro" id="IPR042120">
    <property type="entry name" value="MutL_C_dimsub"/>
</dbReference>
<dbReference type="InterPro" id="IPR042121">
    <property type="entry name" value="MutL_C_regsub"/>
</dbReference>
<dbReference type="InterPro" id="IPR037198">
    <property type="entry name" value="MutL_C_sf"/>
</dbReference>
<dbReference type="InterPro" id="IPR020568">
    <property type="entry name" value="Ribosomal_Su5_D2-typ_SF"/>
</dbReference>
<dbReference type="InterPro" id="IPR014721">
    <property type="entry name" value="Ribsml_uS5_D2-typ_fold_subgr"/>
</dbReference>
<dbReference type="NCBIfam" id="TIGR00585">
    <property type="entry name" value="mutl"/>
    <property type="match status" value="1"/>
</dbReference>
<dbReference type="NCBIfam" id="NF000950">
    <property type="entry name" value="PRK00095.1-3"/>
    <property type="match status" value="1"/>
</dbReference>
<dbReference type="PANTHER" id="PTHR10073">
    <property type="entry name" value="DNA MISMATCH REPAIR PROTEIN MLH, PMS, MUTL"/>
    <property type="match status" value="1"/>
</dbReference>
<dbReference type="PANTHER" id="PTHR10073:SF12">
    <property type="entry name" value="DNA MISMATCH REPAIR PROTEIN MLH1"/>
    <property type="match status" value="1"/>
</dbReference>
<dbReference type="Pfam" id="PF01119">
    <property type="entry name" value="DNA_mis_repair"/>
    <property type="match status" value="1"/>
</dbReference>
<dbReference type="Pfam" id="PF13589">
    <property type="entry name" value="HATPase_c_3"/>
    <property type="match status" value="1"/>
</dbReference>
<dbReference type="Pfam" id="PF08676">
    <property type="entry name" value="MutL_C"/>
    <property type="match status" value="1"/>
</dbReference>
<dbReference type="SMART" id="SM01340">
    <property type="entry name" value="DNA_mis_repair"/>
    <property type="match status" value="1"/>
</dbReference>
<dbReference type="SMART" id="SM00853">
    <property type="entry name" value="MutL_C"/>
    <property type="match status" value="1"/>
</dbReference>
<dbReference type="SUPFAM" id="SSF55874">
    <property type="entry name" value="ATPase domain of HSP90 chaperone/DNA topoisomerase II/histidine kinase"/>
    <property type="match status" value="1"/>
</dbReference>
<dbReference type="SUPFAM" id="SSF118116">
    <property type="entry name" value="DNA mismatch repair protein MutL"/>
    <property type="match status" value="1"/>
</dbReference>
<dbReference type="SUPFAM" id="SSF54211">
    <property type="entry name" value="Ribosomal protein S5 domain 2-like"/>
    <property type="match status" value="1"/>
</dbReference>
<dbReference type="PROSITE" id="PS00058">
    <property type="entry name" value="DNA_MISMATCH_REPAIR_1"/>
    <property type="match status" value="1"/>
</dbReference>
<evidence type="ECO:0000255" key="1">
    <source>
        <dbReference type="HAMAP-Rule" id="MF_00149"/>
    </source>
</evidence>
<evidence type="ECO:0000256" key="2">
    <source>
        <dbReference type="SAM" id="MobiDB-lite"/>
    </source>
</evidence>
<accession>Q49X89</accession>
<protein>
    <recommendedName>
        <fullName evidence="1">DNA mismatch repair protein MutL</fullName>
    </recommendedName>
</protein>
<reference key="1">
    <citation type="journal article" date="2005" name="Proc. Natl. Acad. Sci. U.S.A.">
        <title>Whole genome sequence of Staphylococcus saprophyticus reveals the pathogenesis of uncomplicated urinary tract infection.</title>
        <authorList>
            <person name="Kuroda M."/>
            <person name="Yamashita A."/>
            <person name="Hirakawa H."/>
            <person name="Kumano M."/>
            <person name="Morikawa K."/>
            <person name="Higashide M."/>
            <person name="Maruyama A."/>
            <person name="Inose Y."/>
            <person name="Matoba K."/>
            <person name="Toh H."/>
            <person name="Kuhara S."/>
            <person name="Hattori M."/>
            <person name="Ohta T."/>
        </authorList>
    </citation>
    <scope>NUCLEOTIDE SEQUENCE [LARGE SCALE GENOMIC DNA]</scope>
    <source>
        <strain>ATCC 15305 / DSM 20229 / NCIMB 8711 / NCTC 7292 / S-41</strain>
    </source>
</reference>
<comment type="function">
    <text evidence="1">This protein is involved in the repair of mismatches in DNA. It is required for dam-dependent methyl-directed DNA mismatch repair. May act as a 'molecular matchmaker', a protein that promotes the formation of a stable complex between two or more DNA-binding proteins in an ATP-dependent manner without itself being part of a final effector complex.</text>
</comment>
<comment type="similarity">
    <text evidence="1">Belongs to the DNA mismatch repair MutL/HexB family.</text>
</comment>
<sequence>MGKIKELQTSLANKIAAGEVVERPGSVVKELLENAIDAQATEINIEVEQSGVASIRVVDNGTGIHIDDLGLVFHRHATSKLDADDDLFHIRTLGFRGEALASISSVAKVTLSTCTDNEEGQQIYVENGEILDQKPAKAKRGTDILVESLFYNTPARLKYIKSLYTELGKITDIVNRMAMSHPDIRISLISDGKTIMKTNGSGRTNEVMSEIYGMKVAKDLVHISGDTSDYHLEGFVAKPEHSRSNKHYISIFINGRYIKNFLLNKAILEGYHTLLMIGRYPICYINIEMDPILVDVNVHPTKLEVRLSKEDQLFNLIVEKIREAFKDRILIPQNDMDKITKKNKVLDQFEQQKLDFEKKQQQENHSQPVNSHEEDEKNDDKAYHSSQTHYEPTDYILKEENNTSVSTSPNSDDDYTQTQKSVLYDLENENQSEFINEADFDSDISNHSDSDIKGSVSKDPSRRVPYMEVVGQVHGTYIIAQNENGMYMIDQHAAQERIKYEYFREKIGEVTNEIQNLLIPLTFHFSTDELMIINQHKEELDKVGVHLEPFGGNDYIVDSYPVWFPTAEAEEIIKDMIEYVLEHKKVNVKKIREDAAIMMSCKKSIKANHYLKNNEMADLVNQLRETEDPFTCPHGRPIIINFSNYELERLFKRTI</sequence>
<feature type="chain" id="PRO_1000010086" description="DNA mismatch repair protein MutL">
    <location>
        <begin position="1"/>
        <end position="655"/>
    </location>
</feature>
<feature type="region of interest" description="Disordered" evidence="2">
    <location>
        <begin position="357"/>
        <end position="416"/>
    </location>
</feature>
<feature type="region of interest" description="Disordered" evidence="2">
    <location>
        <begin position="439"/>
        <end position="460"/>
    </location>
</feature>
<feature type="compositionally biased region" description="Basic and acidic residues" evidence="2">
    <location>
        <begin position="371"/>
        <end position="383"/>
    </location>
</feature>
<feature type="compositionally biased region" description="Polar residues" evidence="2">
    <location>
        <begin position="402"/>
        <end position="416"/>
    </location>
</feature>
<gene>
    <name evidence="1" type="primary">mutL</name>
    <name type="ordered locus">SSP1464</name>
</gene>
<name>MUTL_STAS1</name>
<organism>
    <name type="scientific">Staphylococcus saprophyticus subsp. saprophyticus (strain ATCC 15305 / DSM 20229 / NCIMB 8711 / NCTC 7292 / S-41)</name>
    <dbReference type="NCBI Taxonomy" id="342451"/>
    <lineage>
        <taxon>Bacteria</taxon>
        <taxon>Bacillati</taxon>
        <taxon>Bacillota</taxon>
        <taxon>Bacilli</taxon>
        <taxon>Bacillales</taxon>
        <taxon>Staphylococcaceae</taxon>
        <taxon>Staphylococcus</taxon>
    </lineage>
</organism>
<proteinExistence type="inferred from homology"/>
<keyword id="KW-0227">DNA damage</keyword>
<keyword id="KW-0234">DNA repair</keyword>
<keyword id="KW-1185">Reference proteome</keyword>